<accession>A8MJW2</accession>
<dbReference type="EMBL" id="CP000853">
    <property type="protein sequence ID" value="ABW20094.1"/>
    <property type="molecule type" value="Genomic_DNA"/>
</dbReference>
<dbReference type="RefSeq" id="WP_012160401.1">
    <property type="nucleotide sequence ID" value="NC_009922.1"/>
</dbReference>
<dbReference type="SMR" id="A8MJW2"/>
<dbReference type="STRING" id="350688.Clos_2563"/>
<dbReference type="KEGG" id="aoe:Clos_2563"/>
<dbReference type="eggNOG" id="COG0712">
    <property type="taxonomic scope" value="Bacteria"/>
</dbReference>
<dbReference type="HOGENOM" id="CLU_085114_1_1_9"/>
<dbReference type="OrthoDB" id="9802471at2"/>
<dbReference type="Proteomes" id="UP000000269">
    <property type="component" value="Chromosome"/>
</dbReference>
<dbReference type="GO" id="GO:0005886">
    <property type="term" value="C:plasma membrane"/>
    <property type="evidence" value="ECO:0007669"/>
    <property type="project" value="UniProtKB-SubCell"/>
</dbReference>
<dbReference type="GO" id="GO:0045259">
    <property type="term" value="C:proton-transporting ATP synthase complex"/>
    <property type="evidence" value="ECO:0007669"/>
    <property type="project" value="UniProtKB-KW"/>
</dbReference>
<dbReference type="GO" id="GO:0046933">
    <property type="term" value="F:proton-transporting ATP synthase activity, rotational mechanism"/>
    <property type="evidence" value="ECO:0007669"/>
    <property type="project" value="UniProtKB-UniRule"/>
</dbReference>
<dbReference type="Gene3D" id="1.10.520.20">
    <property type="entry name" value="N-terminal domain of the delta subunit of the F1F0-ATP synthase"/>
    <property type="match status" value="1"/>
</dbReference>
<dbReference type="HAMAP" id="MF_01416">
    <property type="entry name" value="ATP_synth_delta_bact"/>
    <property type="match status" value="1"/>
</dbReference>
<dbReference type="InterPro" id="IPR026015">
    <property type="entry name" value="ATP_synth_OSCP/delta_N_sf"/>
</dbReference>
<dbReference type="InterPro" id="IPR020781">
    <property type="entry name" value="ATPase_OSCP/d_CS"/>
</dbReference>
<dbReference type="InterPro" id="IPR000711">
    <property type="entry name" value="ATPase_OSCP/dsu"/>
</dbReference>
<dbReference type="NCBIfam" id="TIGR01145">
    <property type="entry name" value="ATP_synt_delta"/>
    <property type="match status" value="1"/>
</dbReference>
<dbReference type="NCBIfam" id="NF004403">
    <property type="entry name" value="PRK05758.2-4"/>
    <property type="match status" value="1"/>
</dbReference>
<dbReference type="PANTHER" id="PTHR11910">
    <property type="entry name" value="ATP SYNTHASE DELTA CHAIN"/>
    <property type="match status" value="1"/>
</dbReference>
<dbReference type="Pfam" id="PF00213">
    <property type="entry name" value="OSCP"/>
    <property type="match status" value="1"/>
</dbReference>
<dbReference type="PRINTS" id="PR00125">
    <property type="entry name" value="ATPASEDELTA"/>
</dbReference>
<dbReference type="SUPFAM" id="SSF47928">
    <property type="entry name" value="N-terminal domain of the delta subunit of the F1F0-ATP synthase"/>
    <property type="match status" value="1"/>
</dbReference>
<dbReference type="PROSITE" id="PS00389">
    <property type="entry name" value="ATPASE_DELTA"/>
    <property type="match status" value="1"/>
</dbReference>
<proteinExistence type="inferred from homology"/>
<organism>
    <name type="scientific">Alkaliphilus oremlandii (strain OhILAs)</name>
    <name type="common">Clostridium oremlandii (strain OhILAs)</name>
    <dbReference type="NCBI Taxonomy" id="350688"/>
    <lineage>
        <taxon>Bacteria</taxon>
        <taxon>Bacillati</taxon>
        <taxon>Bacillota</taxon>
        <taxon>Clostridia</taxon>
        <taxon>Peptostreptococcales</taxon>
        <taxon>Natronincolaceae</taxon>
        <taxon>Alkaliphilus</taxon>
    </lineage>
</organism>
<reference key="1">
    <citation type="submission" date="2007-10" db="EMBL/GenBank/DDBJ databases">
        <title>Complete genome of Alkaliphilus oremlandii OhILAs.</title>
        <authorList>
            <person name="Copeland A."/>
            <person name="Lucas S."/>
            <person name="Lapidus A."/>
            <person name="Barry K."/>
            <person name="Detter J.C."/>
            <person name="Glavina del Rio T."/>
            <person name="Hammon N."/>
            <person name="Israni S."/>
            <person name="Dalin E."/>
            <person name="Tice H."/>
            <person name="Pitluck S."/>
            <person name="Chain P."/>
            <person name="Malfatti S."/>
            <person name="Shin M."/>
            <person name="Vergez L."/>
            <person name="Schmutz J."/>
            <person name="Larimer F."/>
            <person name="Land M."/>
            <person name="Hauser L."/>
            <person name="Kyrpides N."/>
            <person name="Mikhailova N."/>
            <person name="Stolz J.F."/>
            <person name="Dawson A."/>
            <person name="Fisher E."/>
            <person name="Crable B."/>
            <person name="Perera E."/>
            <person name="Lisak J."/>
            <person name="Ranganathan M."/>
            <person name="Basu P."/>
            <person name="Richardson P."/>
        </authorList>
    </citation>
    <scope>NUCLEOTIDE SEQUENCE [LARGE SCALE GENOMIC DNA]</scope>
    <source>
        <strain>OhILAs</strain>
    </source>
</reference>
<name>ATPD_ALKOO</name>
<protein>
    <recommendedName>
        <fullName evidence="1">ATP synthase subunit delta</fullName>
    </recommendedName>
    <alternativeName>
        <fullName evidence="1">ATP synthase F(1) sector subunit delta</fullName>
    </alternativeName>
    <alternativeName>
        <fullName evidence="1">F-type ATPase subunit delta</fullName>
        <shortName evidence="1">F-ATPase subunit delta</shortName>
    </alternativeName>
</protein>
<feature type="chain" id="PRO_0000370877" description="ATP synthase subunit delta">
    <location>
        <begin position="1"/>
        <end position="180"/>
    </location>
</feature>
<sequence>MAELVSKRYASALFELAFEEQKHHKVQEELAFIRSCIEDEPSFFELLKSPLITADEKKDIISNIFRDRVCMEVLNFLYIIIDKGREAYIKDIVNEYILLVDSVQNKVDAVAITAVPMEKQDLLMLQANLSKSSGKNIQLQNQVDPTIIGGVLVKIGDKVIDGTIKNRLATMQEQLSKILV</sequence>
<comment type="function">
    <text evidence="1">F(1)F(0) ATP synthase produces ATP from ADP in the presence of a proton or sodium gradient. F-type ATPases consist of two structural domains, F(1) containing the extramembraneous catalytic core and F(0) containing the membrane proton channel, linked together by a central stalk and a peripheral stalk. During catalysis, ATP synthesis in the catalytic domain of F(1) is coupled via a rotary mechanism of the central stalk subunits to proton translocation.</text>
</comment>
<comment type="function">
    <text evidence="1">This protein is part of the stalk that links CF(0) to CF(1). It either transmits conformational changes from CF(0) to CF(1) or is implicated in proton conduction.</text>
</comment>
<comment type="subunit">
    <text evidence="1">F-type ATPases have 2 components, F(1) - the catalytic core - and F(0) - the membrane proton channel. F(1) has five subunits: alpha(3), beta(3), gamma(1), delta(1), epsilon(1). F(0) has three main subunits: a(1), b(2) and c(10-14). The alpha and beta chains form an alternating ring which encloses part of the gamma chain. F(1) is attached to F(0) by a central stalk formed by the gamma and epsilon chains, while a peripheral stalk is formed by the delta and b chains.</text>
</comment>
<comment type="subcellular location">
    <subcellularLocation>
        <location evidence="1">Cell membrane</location>
        <topology evidence="1">Peripheral membrane protein</topology>
    </subcellularLocation>
</comment>
<comment type="similarity">
    <text evidence="1">Belongs to the ATPase delta chain family.</text>
</comment>
<keyword id="KW-0066">ATP synthesis</keyword>
<keyword id="KW-1003">Cell membrane</keyword>
<keyword id="KW-0139">CF(1)</keyword>
<keyword id="KW-0375">Hydrogen ion transport</keyword>
<keyword id="KW-0406">Ion transport</keyword>
<keyword id="KW-0472">Membrane</keyword>
<keyword id="KW-1185">Reference proteome</keyword>
<keyword id="KW-0813">Transport</keyword>
<gene>
    <name evidence="1" type="primary">atpH</name>
    <name type="ordered locus">Clos_2563</name>
</gene>
<evidence type="ECO:0000255" key="1">
    <source>
        <dbReference type="HAMAP-Rule" id="MF_01416"/>
    </source>
</evidence>